<sequence>MSSSPSPFGQNEWLVEEMYRKFRDDPSSVDPSWHEFLVDYSPEPTTDSASNGRTTTAAPVTPPTPAPAPAPEPKAAPKPAAKTEAKPAKPAKSATPAKGDESQILRGAAAAVVKNMNASLEVPTATSVRAIPAKLMIDNRVVINNHLKRTRGGKISFTHLLGYAIVQAVKKFPNMNRHFAVVDGKPTAITPAHTNLGLAIDLQGKDGNRSLVVAAIKRCETMRFGQFIAAYEDIVRRARDGKLTAEDFSGVTISLTNPGTLGTVHSVPRLMQGQGAIIGAGAMEYPAEFQGASEERIADLGIGKLITLTSTYDHRIIQGAESGDFLRTIHQLLLDDDFFDEIFRELGIPYEPVRWRTDNPDSIEDKNARVIELIAAYRNRGHLMADIDPLRLDNTRFRSHPDLDVNSHGLTLWDLDREFKVDGFAGVQRKKLRDILSVLRDAYCRHVGVEYTHILEPEQQRWIQERVETKHDKPTVAEQKYILSKLNAAEAFETFLQTKYVGQKRFSLEGAETVIPMMDAVIDQCAEHGLDEVVIAMPHRGRLNVLANIVGKPYSQIFSEFEGNLNPSQAHGSGDVKYHLGATGTYIQMFGDNDIEVSLTANPSHLEAVDPVLEGLVRAKQDLLDTGEEGSDNRFSVVPLMLHGDAAFAGQGVVAETLNLALLRGYRTGGTIHIVVNNQIGFTTAPTDSRSSEYCTDVAKMIGAPIFHVNGDDPEACAWVARLAVDFRQAFKKDVVIDMLCYRRRGHNEGDDPSMTQPYMYDVIDTKRGSRKAYTEALIGRGDISMKEAEDALRDYQGQLERVFNEVRELEKHEIEPSESVEADQQIPSKLATAVDKAMLQRIGDAHLALPEGFTVHPRVRPVLEKRREMAYEGRIDWAFAELLALGSLIAEGKLVRLSGQDTQRGTFTQRHAVIVDRKTGEEFTPLQLLATNPDGTPTGGKFLVYNSALSEFAAVGFEYGYSVGNPDAMVLWEAQFGDFVNGAQSIIDEFISSGEAKWGQLSDVVLLLPHGHEGQGPDHTSGRIERFLQLWAEGSMTIAMPSTPANYFHLLRRHGKDGIQRPLIVFTPKSMLRNKAAVSDIRDFTESKFRSVLEEPMYTDGEGDRNKVTRLLLTSGKIYYELAARKAKENREDVAIVRIEQLAPLPRRRLAETLDRYPNVKEKFWVQEEPANQGAWPSFGLTLPEILPDHFTGLKRISRRAMSAPSSGSSKVHAVEQQEILDTAFG</sequence>
<gene>
    <name type="primary">kgd</name>
    <name type="synonym">sucA</name>
    <name type="ordered locus">MSMEG_5049</name>
    <name type="ordered locus">MSMEI_4922</name>
</gene>
<protein>
    <recommendedName>
        <fullName>Multifunctional 2-oxoglutarate metabolism enzyme</fullName>
    </recommendedName>
    <alternativeName>
        <fullName>2-hydroxy-3-oxoadipate synthase</fullName>
        <shortName>HOA synthase</shortName>
        <shortName>HOAS</shortName>
        <ecNumber>2.2.1.5</ecNumber>
    </alternativeName>
    <alternativeName>
        <fullName>2-oxoglutarate carboxy-lyase</fullName>
    </alternativeName>
    <alternativeName>
        <fullName>2-oxoglutarate decarboxylase</fullName>
    </alternativeName>
    <alternativeName>
        <fullName>Alpha-ketoglutarate decarboxylase</fullName>
        <shortName>KG decarboxylase</shortName>
        <shortName>KGD</shortName>
        <ecNumber>4.1.1.71</ecNumber>
    </alternativeName>
    <alternativeName>
        <fullName>Alpha-ketoglutarate-glyoxylate carboligase</fullName>
    </alternativeName>
    <domain>
        <recommendedName>
            <fullName>2-oxoglutarate dehydrogenase E1 component</fullName>
            <shortName>ODH E1 component</shortName>
            <ecNumber>1.2.4.2</ecNumber>
        </recommendedName>
        <alternativeName>
            <fullName>Alpha-ketoglutarate dehydrogenase E1 component</fullName>
            <shortName>KDH E1 component</shortName>
        </alternativeName>
    </domain>
    <domain>
        <recommendedName>
            <fullName>Dihydrolipoyllysine-residue succinyltransferase component of 2-oxoglutarate dehydrogenase complex</fullName>
            <ecNumber>2.3.1.61</ecNumber>
        </recommendedName>
        <alternativeName>
            <fullName>2-oxoglutarate dehydrogenase complex E2 component</fullName>
            <shortName>ODH E2 component</shortName>
            <shortName>OGDC-E2</shortName>
        </alternativeName>
        <alternativeName>
            <fullName>Dihydrolipoamide succinyltransferase</fullName>
        </alternativeName>
    </domain>
</protein>
<evidence type="ECO:0000250" key="1"/>
<evidence type="ECO:0000255" key="2"/>
<evidence type="ECO:0000256" key="3">
    <source>
        <dbReference type="SAM" id="MobiDB-lite"/>
    </source>
</evidence>
<evidence type="ECO:0000269" key="4">
    <source>
    </source>
</evidence>
<evidence type="ECO:0000269" key="5">
    <source>
    </source>
</evidence>
<evidence type="ECO:0000305" key="6"/>
<evidence type="ECO:0000305" key="7">
    <source>
    </source>
</evidence>
<evidence type="ECO:0007744" key="8">
    <source>
        <dbReference type="PDB" id="2XT6"/>
    </source>
</evidence>
<evidence type="ECO:0007744" key="9">
    <source>
        <dbReference type="PDB" id="2XTA"/>
    </source>
</evidence>
<evidence type="ECO:0007744" key="10">
    <source>
        <dbReference type="PDB" id="2Y0P"/>
    </source>
</evidence>
<evidence type="ECO:0007744" key="11">
    <source>
        <dbReference type="PDB" id="2YIC"/>
    </source>
</evidence>
<evidence type="ECO:0007744" key="12">
    <source>
        <dbReference type="PDB" id="2YID"/>
    </source>
</evidence>
<evidence type="ECO:0007829" key="13">
    <source>
        <dbReference type="PDB" id="2XT6"/>
    </source>
</evidence>
<evidence type="ECO:0007829" key="14">
    <source>
        <dbReference type="PDB" id="2XTA"/>
    </source>
</evidence>
<evidence type="ECO:0007829" key="15">
    <source>
        <dbReference type="PDB" id="2Y0P"/>
    </source>
</evidence>
<evidence type="ECO:0007829" key="16">
    <source>
        <dbReference type="PDB" id="2YIC"/>
    </source>
</evidence>
<evidence type="ECO:0007829" key="17">
    <source>
        <dbReference type="PDB" id="2YID"/>
    </source>
</evidence>
<evidence type="ECO:0007829" key="18">
    <source>
        <dbReference type="PDB" id="6R29"/>
    </source>
</evidence>
<evidence type="ECO:0007829" key="19">
    <source>
        <dbReference type="PDB" id="6R2B"/>
    </source>
</evidence>
<evidence type="ECO:0007829" key="20">
    <source>
        <dbReference type="PDB" id="6R2C"/>
    </source>
</evidence>
<name>KGD_MYCS2</name>
<organism>
    <name type="scientific">Mycolicibacterium smegmatis (strain ATCC 700084 / mc(2)155)</name>
    <name type="common">Mycobacterium smegmatis</name>
    <dbReference type="NCBI Taxonomy" id="246196"/>
    <lineage>
        <taxon>Bacteria</taxon>
        <taxon>Bacillati</taxon>
        <taxon>Actinomycetota</taxon>
        <taxon>Actinomycetes</taxon>
        <taxon>Mycobacteriales</taxon>
        <taxon>Mycobacteriaceae</taxon>
        <taxon>Mycolicibacterium</taxon>
    </lineage>
</organism>
<keyword id="KW-0002">3D-structure</keyword>
<keyword id="KW-0012">Acyltransferase</keyword>
<keyword id="KW-0021">Allosteric enzyme</keyword>
<keyword id="KW-0175">Coiled coil</keyword>
<keyword id="KW-0210">Decarboxylase</keyword>
<keyword id="KW-0456">Lyase</keyword>
<keyword id="KW-0460">Magnesium</keyword>
<keyword id="KW-0479">Metal-binding</keyword>
<keyword id="KW-0511">Multifunctional enzyme</keyword>
<keyword id="KW-0560">Oxidoreductase</keyword>
<keyword id="KW-1185">Reference proteome</keyword>
<keyword id="KW-0786">Thiamine pyrophosphate</keyword>
<keyword id="KW-0808">Transferase</keyword>
<keyword id="KW-0816">Tricarboxylic acid cycle</keyword>
<accession>A0R2B1</accession>
<accession>I7GDF5</accession>
<proteinExistence type="evidence at protein level"/>
<comment type="function">
    <text evidence="4 5">Shows three enzymatic activities that share a first common step, the attack of thiamine-PP on 2-oxoglutarate (alpha-ketoglutarate, KG), leading to the formation of an enamine-thiamine-PP intermediate upon decarboxylation. Thus, displays KGD activity, catalyzing the decarboxylation from five-carbon 2-oxoglutarate to four-carbon succinate semialdehyde (SSA). Also catalyzes C-C bond formation between the activated aldehyde formed after decarboxylation of alpha-ketoglutarate and the carbonyl of glyoxylate (GLX), to yield 2-hydroxy-3-oxoadipate (HOA), which spontaneously decarboxylates to form 5-hydroxylevulinate (HLA). And is also a component of the 2-oxoglutarate dehydrogenase (ODH) complex, that catalyzes the overall conversion of 2-oxoglutarate to succinyl-CoA and CO(2). The KG decarboxylase and KG dehydrogenase reactions provide two alternative, tightly regulated, pathways connecting the oxidative and reductive branches of the TCA cycle.</text>
</comment>
<comment type="catalytic activity">
    <reaction evidence="5">
        <text>glyoxylate + 2-oxoglutarate + H(+) = 2-hydroxy-3-oxoadipate + CO2</text>
        <dbReference type="Rhea" id="RHEA:14341"/>
        <dbReference type="ChEBI" id="CHEBI:15378"/>
        <dbReference type="ChEBI" id="CHEBI:16526"/>
        <dbReference type="ChEBI" id="CHEBI:16810"/>
        <dbReference type="ChEBI" id="CHEBI:36655"/>
        <dbReference type="ChEBI" id="CHEBI:57712"/>
        <dbReference type="EC" id="2.2.1.5"/>
    </reaction>
</comment>
<comment type="catalytic activity">
    <reaction evidence="5">
        <text>2-oxoglutarate + H(+) = succinate semialdehyde + CO2</text>
        <dbReference type="Rhea" id="RHEA:10524"/>
        <dbReference type="ChEBI" id="CHEBI:15378"/>
        <dbReference type="ChEBI" id="CHEBI:16526"/>
        <dbReference type="ChEBI" id="CHEBI:16810"/>
        <dbReference type="ChEBI" id="CHEBI:57706"/>
        <dbReference type="EC" id="4.1.1.71"/>
    </reaction>
</comment>
<comment type="catalytic activity">
    <reaction evidence="5">
        <text>N(6)-[(R)-lipoyl]-L-lysyl-[protein] + 2-oxoglutarate + H(+) = N(6)-[(R)-S(8)-succinyldihydrolipoyl]-L-lysyl-[protein] + CO2</text>
        <dbReference type="Rhea" id="RHEA:12188"/>
        <dbReference type="Rhea" id="RHEA-COMP:10474"/>
        <dbReference type="Rhea" id="RHEA-COMP:20092"/>
        <dbReference type="ChEBI" id="CHEBI:15378"/>
        <dbReference type="ChEBI" id="CHEBI:16526"/>
        <dbReference type="ChEBI" id="CHEBI:16810"/>
        <dbReference type="ChEBI" id="CHEBI:83099"/>
        <dbReference type="ChEBI" id="CHEBI:83120"/>
        <dbReference type="EC" id="1.2.4.2"/>
    </reaction>
</comment>
<comment type="catalytic activity">
    <reaction evidence="5">
        <text>N(6)-[(R)-dihydrolipoyl]-L-lysyl-[protein] + succinyl-CoA = N(6)-[(R)-S(8)-succinyldihydrolipoyl]-L-lysyl-[protein] + CoA</text>
        <dbReference type="Rhea" id="RHEA:15213"/>
        <dbReference type="Rhea" id="RHEA-COMP:10475"/>
        <dbReference type="Rhea" id="RHEA-COMP:20092"/>
        <dbReference type="ChEBI" id="CHEBI:57287"/>
        <dbReference type="ChEBI" id="CHEBI:57292"/>
        <dbReference type="ChEBI" id="CHEBI:83100"/>
        <dbReference type="ChEBI" id="CHEBI:83120"/>
        <dbReference type="EC" id="2.3.1.61"/>
    </reaction>
</comment>
<comment type="cofactor">
    <cofactor evidence="5">
        <name>Mg(2+)</name>
        <dbReference type="ChEBI" id="CHEBI:18420"/>
    </cofactor>
</comment>
<comment type="cofactor">
    <cofactor evidence="5">
        <name>thiamine diphosphate</name>
        <dbReference type="ChEBI" id="CHEBI:58937"/>
    </cofactor>
</comment>
<comment type="activity regulation">
    <text evidence="4 5">Alpha-ketoglutarate dehydrogenase and decarboxylase activities are inhibited by unphosphorylated GarA, and allosterically activated by acetyl-CoA, the main substrate of the TCA cycle. Both the phosphoadenosine and acetyl moieties of acetyl-CoA are important for activation because neither CoA nor the synthetic compound S-(2-acetamidoethyl)-ethanethioate (which mimics the terminal acetyl-phosphopantetheine group of acetyl-CoA) has an activation effect.</text>
</comment>
<comment type="biophysicochemical properties">
    <kinetics>
        <KM evidence="4">0.54 mM for alpha-ketoglutarate</KM>
    </kinetics>
</comment>
<comment type="pathway">
    <text evidence="5">Carbohydrate metabolism; tricarboxylic acid cycle; succinate from 2-oxoglutarate (transferase route): step 1/2.</text>
</comment>
<comment type="pathway">
    <text evidence="5">Carbohydrate metabolism; tricarboxylic acid cycle; succinyl-CoA from 2-oxoglutarate (dehydrogenase route): step 1/1.</text>
</comment>
<comment type="subunit">
    <text evidence="4 5">Homodimer. Interacts with the FHA domain of unphosphorylated GarA. The 2-oxoglutarate dehydrogenase (ODH) complex contains multiple copies of three enzymatic components: 2-oxoglutarate dehydrogenase (E1), dihydrolipoamide succinyltransferase (E2) and lipoamide dehydrogenase (E3).</text>
</comment>
<comment type="domain">
    <text evidence="1">Is a fusion protein with two major domains exhibiting structural features of an E1 and E2 protein, and a short sequence stretch of E1 localized at the N-terminus, which is connected by a linker region to the rest of the protein.</text>
</comment>
<comment type="disruption phenotype">
    <text evidence="5">Cells lacking this gene do not show any ODH activity, in contrast to wild-type, demonstrating that this protein is part of a functional ODH complex in mycobacteria.</text>
</comment>
<comment type="similarity">
    <text evidence="6">Belongs to the 2-oxoacid dehydrogenase family. Kgd subfamily.</text>
</comment>
<reference key="1">
    <citation type="submission" date="2006-10" db="EMBL/GenBank/DDBJ databases">
        <authorList>
            <person name="Fleischmann R.D."/>
            <person name="Dodson R.J."/>
            <person name="Haft D.H."/>
            <person name="Merkel J.S."/>
            <person name="Nelson W.C."/>
            <person name="Fraser C.M."/>
        </authorList>
    </citation>
    <scope>NUCLEOTIDE SEQUENCE [LARGE SCALE GENOMIC DNA]</scope>
    <source>
        <strain>ATCC 700084 / mc(2)155</strain>
    </source>
</reference>
<reference key="2">
    <citation type="journal article" date="2007" name="Genome Biol.">
        <title>Interrupted coding sequences in Mycobacterium smegmatis: authentic mutations or sequencing errors?</title>
        <authorList>
            <person name="Deshayes C."/>
            <person name="Perrodou E."/>
            <person name="Gallien S."/>
            <person name="Euphrasie D."/>
            <person name="Schaeffer C."/>
            <person name="Van-Dorsselaer A."/>
            <person name="Poch O."/>
            <person name="Lecompte O."/>
            <person name="Reyrat J.-M."/>
        </authorList>
    </citation>
    <scope>NUCLEOTIDE SEQUENCE [LARGE SCALE GENOMIC DNA]</scope>
    <source>
        <strain>ATCC 700084 / mc(2)155</strain>
    </source>
</reference>
<reference key="3">
    <citation type="journal article" date="2009" name="Genome Res.">
        <title>Ortho-proteogenomics: multiple proteomes investigation through orthology and a new MS-based protocol.</title>
        <authorList>
            <person name="Gallien S."/>
            <person name="Perrodou E."/>
            <person name="Carapito C."/>
            <person name="Deshayes C."/>
            <person name="Reyrat J.-M."/>
            <person name="Van Dorsselaer A."/>
            <person name="Poch O."/>
            <person name="Schaeffer C."/>
            <person name="Lecompte O."/>
        </authorList>
    </citation>
    <scope>NUCLEOTIDE SEQUENCE [LARGE SCALE GENOMIC DNA]</scope>
    <scope>IDENTIFICATION BY MASS SPECTROMETRY [LARGE SCALE ANALYSIS]</scope>
    <source>
        <strain>ATCC 700084 / mc(2)155</strain>
    </source>
</reference>
<reference key="4">
    <citation type="journal article" date="2008" name="Mol. Microbiol.">
        <title>Regulation of glutamate metabolism by protein kinases in mycobacteria.</title>
        <authorList>
            <person name="O'Hare H.M."/>
            <person name="Duran R."/>
            <person name="Cervenansky C."/>
            <person name="Bellinzoni M."/>
            <person name="Wehenkel A.M."/>
            <person name="Pritsch O."/>
            <person name="Obal G."/>
            <person name="Baumgartner J."/>
            <person name="Vialaret J."/>
            <person name="Johnsson K."/>
            <person name="Alzari P.M."/>
        </authorList>
    </citation>
    <scope>FUNCTION IN 2-OXOGLUTARATE DECARBOXYLATION</scope>
    <scope>ACTIVITY REGULATION</scope>
    <scope>KINETIC PARAMETERS</scope>
    <scope>INTERACTION WITH GARA</scope>
    <source>
        <strain>ATCC 700084 / mc(2)155</strain>
    </source>
</reference>
<reference evidence="8 9 10 11 12" key="5">
    <citation type="journal article" date="2011" name="Chem. Biol.">
        <title>Functional plasticity and allosteric regulation of alpha-ketoglutarate decarboxylase in central mycobacterial metabolism.</title>
        <authorList>
            <person name="Wagner T."/>
            <person name="Bellinzoni M."/>
            <person name="Wehenkel A."/>
            <person name="O'Hare H.M."/>
            <person name="Alzari P.M."/>
        </authorList>
    </citation>
    <scope>X-RAY CRYSTALLOGRAPHY (1.96 ANGSTROMS) OF 116-1227 IN COMPLEXES WITH THIAMINE PYROPHOSPHATE; ACETYL-COA; ENAMINE-THDP REACTION INTERMEDIATE AND MAGNESIUM</scope>
    <scope>FUNCTION AS A MULTIFUNCTIONAL ENZYME</scope>
    <scope>CATALYTIC ACTIVITY</scope>
    <scope>COFACTOR</scope>
    <scope>ACTIVITY REGULATION</scope>
    <scope>SUBUNIT</scope>
    <scope>PATHWAY</scope>
    <scope>MUTAGENESIS OF HIS-539; HIS-579; HIS-747; ARG-781; HIS-1020; GLU-1034 AND ARG-1062</scope>
    <scope>DISRUPTION PHENOTYPE</scope>
    <source>
        <strain>ATCC 700084 / mc(2)155</strain>
    </source>
</reference>
<dbReference type="EC" id="2.2.1.5"/>
<dbReference type="EC" id="4.1.1.71"/>
<dbReference type="EC" id="1.2.4.2"/>
<dbReference type="EC" id="2.3.1.61"/>
<dbReference type="EMBL" id="CP000480">
    <property type="protein sequence ID" value="ABK74238.1"/>
    <property type="molecule type" value="Genomic_DNA"/>
</dbReference>
<dbReference type="EMBL" id="CP001663">
    <property type="protein sequence ID" value="AFP41366.1"/>
    <property type="molecule type" value="Genomic_DNA"/>
</dbReference>
<dbReference type="RefSeq" id="WP_011730279.1">
    <property type="nucleotide sequence ID" value="NZ_SIJM01000019.1"/>
</dbReference>
<dbReference type="RefSeq" id="YP_889299.1">
    <property type="nucleotide sequence ID" value="NC_008596.1"/>
</dbReference>
<dbReference type="PDB" id="2XT6">
    <property type="method" value="X-ray"/>
    <property type="resolution" value="2.74 A"/>
    <property type="chains" value="A/B=116-1227"/>
</dbReference>
<dbReference type="PDB" id="2XTA">
    <property type="method" value="X-ray"/>
    <property type="resolution" value="2.20 A"/>
    <property type="chains" value="A/B/C/D=361-1227"/>
</dbReference>
<dbReference type="PDB" id="2Y0P">
    <property type="method" value="X-ray"/>
    <property type="resolution" value="2.40 A"/>
    <property type="chains" value="A/B/C/D=361-1227"/>
</dbReference>
<dbReference type="PDB" id="2YIC">
    <property type="method" value="X-ray"/>
    <property type="resolution" value="1.96 A"/>
    <property type="chains" value="A/B/C/D=361-1227"/>
</dbReference>
<dbReference type="PDB" id="2YID">
    <property type="method" value="X-ray"/>
    <property type="resolution" value="2.25 A"/>
    <property type="chains" value="A/B/C/D=361-1227"/>
</dbReference>
<dbReference type="PDB" id="3ZHQ">
    <property type="method" value="X-ray"/>
    <property type="resolution" value="2.50 A"/>
    <property type="chains" value="A/B/C/D=361-1227"/>
</dbReference>
<dbReference type="PDB" id="3ZHR">
    <property type="method" value="X-ray"/>
    <property type="resolution" value="2.10 A"/>
    <property type="chains" value="A/B/C/D=361-1227"/>
</dbReference>
<dbReference type="PDB" id="3ZHS">
    <property type="method" value="X-ray"/>
    <property type="resolution" value="2.10 A"/>
    <property type="chains" value="A/B/C/D=361-1227"/>
</dbReference>
<dbReference type="PDB" id="3ZHT">
    <property type="method" value="X-ray"/>
    <property type="resolution" value="2.15 A"/>
    <property type="chains" value="A/B/C/D=361-1227"/>
</dbReference>
<dbReference type="PDB" id="3ZHU">
    <property type="method" value="X-ray"/>
    <property type="resolution" value="2.30 A"/>
    <property type="chains" value="A/B/C/D=361-1227"/>
</dbReference>
<dbReference type="PDB" id="3ZHV">
    <property type="method" value="X-ray"/>
    <property type="resolution" value="2.30 A"/>
    <property type="chains" value="A/B/C/D=361-1227"/>
</dbReference>
<dbReference type="PDB" id="6I2Q">
    <property type="method" value="X-ray"/>
    <property type="resolution" value="2.15 A"/>
    <property type="chains" value="A=361-1227"/>
</dbReference>
<dbReference type="PDB" id="6I2R">
    <property type="method" value="X-ray"/>
    <property type="resolution" value="2.20 A"/>
    <property type="chains" value="A/C=361-1227"/>
</dbReference>
<dbReference type="PDB" id="6I2S">
    <property type="method" value="X-ray"/>
    <property type="resolution" value="2.40 A"/>
    <property type="chains" value="A=361-1227"/>
</dbReference>
<dbReference type="PDB" id="6R29">
    <property type="method" value="X-ray"/>
    <property type="resolution" value="1.67 A"/>
    <property type="chains" value="A/B=361-1227"/>
</dbReference>
<dbReference type="PDB" id="6R2A">
    <property type="method" value="X-ray"/>
    <property type="resolution" value="1.70 A"/>
    <property type="chains" value="A/B=361-1227"/>
</dbReference>
<dbReference type="PDB" id="6R2B">
    <property type="method" value="X-ray"/>
    <property type="resolution" value="1.96 A"/>
    <property type="chains" value="A/B/C/D=361-1227"/>
</dbReference>
<dbReference type="PDB" id="6R2C">
    <property type="method" value="X-ray"/>
    <property type="resolution" value="2.09 A"/>
    <property type="chains" value="A/B/C/D=361-1227"/>
</dbReference>
<dbReference type="PDB" id="6R2D">
    <property type="method" value="X-ray"/>
    <property type="resolution" value="2.30 A"/>
    <property type="chains" value="A/B/C/D=361-1227"/>
</dbReference>
<dbReference type="PDB" id="8P5R">
    <property type="method" value="X-ray"/>
    <property type="resolution" value="4.56 A"/>
    <property type="chains" value="A/B/C/D/E/F/N/O/P/Q=2-1227"/>
</dbReference>
<dbReference type="PDBsum" id="2XT6"/>
<dbReference type="PDBsum" id="2XTA"/>
<dbReference type="PDBsum" id="2Y0P"/>
<dbReference type="PDBsum" id="2YIC"/>
<dbReference type="PDBsum" id="2YID"/>
<dbReference type="PDBsum" id="3ZHQ"/>
<dbReference type="PDBsum" id="3ZHR"/>
<dbReference type="PDBsum" id="3ZHS"/>
<dbReference type="PDBsum" id="3ZHT"/>
<dbReference type="PDBsum" id="3ZHU"/>
<dbReference type="PDBsum" id="3ZHV"/>
<dbReference type="PDBsum" id="6I2Q"/>
<dbReference type="PDBsum" id="6I2R"/>
<dbReference type="PDBsum" id="6I2S"/>
<dbReference type="PDBsum" id="6R29"/>
<dbReference type="PDBsum" id="6R2A"/>
<dbReference type="PDBsum" id="6R2B"/>
<dbReference type="PDBsum" id="6R2C"/>
<dbReference type="PDBsum" id="6R2D"/>
<dbReference type="PDBsum" id="8P5R"/>
<dbReference type="SMR" id="A0R2B1"/>
<dbReference type="IntAct" id="A0R2B1">
    <property type="interactions" value="1"/>
</dbReference>
<dbReference type="STRING" id="246196.MSMEG_5049"/>
<dbReference type="PaxDb" id="246196-MSMEI_4922"/>
<dbReference type="KEGG" id="msb:LJ00_24970"/>
<dbReference type="KEGG" id="msg:MSMEI_4922"/>
<dbReference type="KEGG" id="msm:MSMEG_5049"/>
<dbReference type="PATRIC" id="fig|246196.19.peg.4927"/>
<dbReference type="eggNOG" id="COG0508">
    <property type="taxonomic scope" value="Bacteria"/>
</dbReference>
<dbReference type="eggNOG" id="COG0567">
    <property type="taxonomic scope" value="Bacteria"/>
</dbReference>
<dbReference type="OrthoDB" id="9759785at2"/>
<dbReference type="BRENDA" id="4.1.1.71">
    <property type="organism ID" value="3512"/>
</dbReference>
<dbReference type="SABIO-RK" id="A0R2B1"/>
<dbReference type="UniPathway" id="UPA00223">
    <property type="reaction ID" value="UER00997"/>
</dbReference>
<dbReference type="UniPathway" id="UPA00223">
    <property type="reaction ID" value="UER01001"/>
</dbReference>
<dbReference type="EvolutionaryTrace" id="A0R2B1"/>
<dbReference type="Proteomes" id="UP000000757">
    <property type="component" value="Chromosome"/>
</dbReference>
<dbReference type="Proteomes" id="UP000006158">
    <property type="component" value="Chromosome"/>
</dbReference>
<dbReference type="GO" id="GO:0005829">
    <property type="term" value="C:cytosol"/>
    <property type="evidence" value="ECO:0007669"/>
    <property type="project" value="TreeGrafter"/>
</dbReference>
<dbReference type="GO" id="GO:0045252">
    <property type="term" value="C:oxoglutarate dehydrogenase complex"/>
    <property type="evidence" value="ECO:0007669"/>
    <property type="project" value="TreeGrafter"/>
</dbReference>
<dbReference type="GO" id="GO:0050439">
    <property type="term" value="F:2-hydroxy-3-oxoadipate synthase activity"/>
    <property type="evidence" value="ECO:0007669"/>
    <property type="project" value="UniProtKB-EC"/>
</dbReference>
<dbReference type="GO" id="GO:0008683">
    <property type="term" value="F:2-oxoglutarate decarboxylase activity"/>
    <property type="evidence" value="ECO:0007669"/>
    <property type="project" value="UniProtKB-EC"/>
</dbReference>
<dbReference type="GO" id="GO:0004149">
    <property type="term" value="F:dihydrolipoyllysine-residue succinyltransferase activity"/>
    <property type="evidence" value="ECO:0007669"/>
    <property type="project" value="UniProtKB-EC"/>
</dbReference>
<dbReference type="GO" id="GO:0000287">
    <property type="term" value="F:magnesium ion binding"/>
    <property type="evidence" value="ECO:0007669"/>
    <property type="project" value="UniProtKB-ARBA"/>
</dbReference>
<dbReference type="GO" id="GO:0004591">
    <property type="term" value="F:oxoglutarate dehydrogenase (succinyl-transferring) activity"/>
    <property type="evidence" value="ECO:0007669"/>
    <property type="project" value="UniProtKB-EC"/>
</dbReference>
<dbReference type="GO" id="GO:0030976">
    <property type="term" value="F:thiamine pyrophosphate binding"/>
    <property type="evidence" value="ECO:0007669"/>
    <property type="project" value="InterPro"/>
</dbReference>
<dbReference type="GO" id="GO:0006099">
    <property type="term" value="P:tricarboxylic acid cycle"/>
    <property type="evidence" value="ECO:0007669"/>
    <property type="project" value="UniProtKB-UniPathway"/>
</dbReference>
<dbReference type="CDD" id="cd02016">
    <property type="entry name" value="TPP_E1_OGDC_like"/>
    <property type="match status" value="1"/>
</dbReference>
<dbReference type="FunFam" id="3.40.50.11610:FF:000002">
    <property type="entry name" value="2-oxoglutarate dehydrogenase E1 component"/>
    <property type="match status" value="1"/>
</dbReference>
<dbReference type="FunFam" id="3.40.50.970:FF:000018">
    <property type="entry name" value="2-oxoglutarate dehydrogenase E1 component"/>
    <property type="match status" value="1"/>
</dbReference>
<dbReference type="Gene3D" id="3.40.50.12470">
    <property type="match status" value="1"/>
</dbReference>
<dbReference type="Gene3D" id="3.40.50.970">
    <property type="match status" value="1"/>
</dbReference>
<dbReference type="Gene3D" id="3.30.559.10">
    <property type="entry name" value="Chloramphenicol acetyltransferase-like domain"/>
    <property type="match status" value="1"/>
</dbReference>
<dbReference type="Gene3D" id="3.40.50.11610">
    <property type="entry name" value="Multifunctional 2-oxoglutarate metabolism enzyme, C-terminal domain"/>
    <property type="match status" value="1"/>
</dbReference>
<dbReference type="Gene3D" id="1.10.287.1150">
    <property type="entry name" value="TPP helical domain"/>
    <property type="match status" value="1"/>
</dbReference>
<dbReference type="InterPro" id="IPR001078">
    <property type="entry name" value="2-oxoacid_DH_actylTfrase"/>
</dbReference>
<dbReference type="InterPro" id="IPR032106">
    <property type="entry name" value="2-oxogl_dehyd_N"/>
</dbReference>
<dbReference type="InterPro" id="IPR011603">
    <property type="entry name" value="2oxoglutarate_DH_E1"/>
</dbReference>
<dbReference type="InterPro" id="IPR023213">
    <property type="entry name" value="CAT-like_dom_sf"/>
</dbReference>
<dbReference type="InterPro" id="IPR001017">
    <property type="entry name" value="DH_E1"/>
</dbReference>
<dbReference type="InterPro" id="IPR042179">
    <property type="entry name" value="KGD_C_sf"/>
</dbReference>
<dbReference type="InterPro" id="IPR031717">
    <property type="entry name" value="ODO-1/KGD_C"/>
</dbReference>
<dbReference type="InterPro" id="IPR029061">
    <property type="entry name" value="THDP-binding"/>
</dbReference>
<dbReference type="InterPro" id="IPR005475">
    <property type="entry name" value="Transketolase-like_Pyr-bd"/>
</dbReference>
<dbReference type="NCBIfam" id="TIGR00239">
    <property type="entry name" value="2oxo_dh_E1"/>
    <property type="match status" value="1"/>
</dbReference>
<dbReference type="NCBIfam" id="NF006914">
    <property type="entry name" value="PRK09404.1"/>
    <property type="match status" value="1"/>
</dbReference>
<dbReference type="NCBIfam" id="NF008907">
    <property type="entry name" value="PRK12270.1"/>
    <property type="match status" value="1"/>
</dbReference>
<dbReference type="PANTHER" id="PTHR23152:SF4">
    <property type="entry name" value="2-OXOADIPATE DEHYDROGENASE COMPLEX COMPONENT E1"/>
    <property type="match status" value="1"/>
</dbReference>
<dbReference type="PANTHER" id="PTHR23152">
    <property type="entry name" value="2-OXOGLUTARATE DEHYDROGENASE"/>
    <property type="match status" value="1"/>
</dbReference>
<dbReference type="Pfam" id="PF00198">
    <property type="entry name" value="2-oxoacid_dh"/>
    <property type="match status" value="1"/>
</dbReference>
<dbReference type="Pfam" id="PF16078">
    <property type="entry name" value="2-oxogl_dehyd_N"/>
    <property type="match status" value="1"/>
</dbReference>
<dbReference type="Pfam" id="PF00676">
    <property type="entry name" value="E1_dh"/>
    <property type="match status" value="1"/>
</dbReference>
<dbReference type="Pfam" id="PF16870">
    <property type="entry name" value="OxoGdeHyase_C"/>
    <property type="match status" value="1"/>
</dbReference>
<dbReference type="Pfam" id="PF02779">
    <property type="entry name" value="Transket_pyr"/>
    <property type="match status" value="1"/>
</dbReference>
<dbReference type="PIRSF" id="PIRSF000157">
    <property type="entry name" value="Oxoglu_dh_E1"/>
    <property type="match status" value="1"/>
</dbReference>
<dbReference type="SMART" id="SM00861">
    <property type="entry name" value="Transket_pyr"/>
    <property type="match status" value="1"/>
</dbReference>
<dbReference type="SUPFAM" id="SSF52777">
    <property type="entry name" value="CoA-dependent acyltransferases"/>
    <property type="match status" value="1"/>
</dbReference>
<dbReference type="SUPFAM" id="SSF52518">
    <property type="entry name" value="Thiamin diphosphate-binding fold (THDP-binding)"/>
    <property type="match status" value="2"/>
</dbReference>
<feature type="chain" id="PRO_0000310718" description="Multifunctional 2-oxoglutarate metabolism enzyme">
    <location>
        <begin position="1"/>
        <end position="1227"/>
    </location>
</feature>
<feature type="region of interest" description="2-oxoglutarate dehydrogenase E1, N-terminal part">
    <location>
        <begin position="1"/>
        <end position="41"/>
    </location>
</feature>
<feature type="region of interest" description="Disordered" evidence="3">
    <location>
        <begin position="23"/>
        <end position="102"/>
    </location>
</feature>
<feature type="region of interest" description="Linker">
    <location>
        <begin position="42"/>
        <end position="88"/>
    </location>
</feature>
<feature type="region of interest" description="Succinyltransferase E2">
    <location>
        <begin position="89"/>
        <end position="335"/>
    </location>
</feature>
<feature type="region of interest" description="2-oxoglutarate dehydrogenase E1, C-terminal part">
    <location>
        <begin position="336"/>
        <end position="1227"/>
    </location>
</feature>
<feature type="coiled-coil region" evidence="2">
    <location>
        <begin position="783"/>
        <end position="814"/>
    </location>
</feature>
<feature type="compositionally biased region" description="Basic and acidic residues" evidence="3">
    <location>
        <begin position="23"/>
        <end position="37"/>
    </location>
</feature>
<feature type="compositionally biased region" description="Polar residues" evidence="3">
    <location>
        <begin position="43"/>
        <end position="53"/>
    </location>
</feature>
<feature type="compositionally biased region" description="Pro residues" evidence="3">
    <location>
        <begin position="60"/>
        <end position="76"/>
    </location>
</feature>
<feature type="compositionally biased region" description="Low complexity" evidence="3">
    <location>
        <begin position="88"/>
        <end position="97"/>
    </location>
</feature>
<feature type="active site" description="Proton acceptor; for succinyltransferase activity" evidence="1">
    <location>
        <position position="314"/>
    </location>
</feature>
<feature type="binding site" evidence="5 9">
    <location>
        <position position="540"/>
    </location>
    <ligand>
        <name>thiamine diphosphate</name>
        <dbReference type="ChEBI" id="CHEBI:58937"/>
    </ligand>
</feature>
<feature type="binding site" evidence="7 10">
    <location>
        <position position="579"/>
    </location>
    <ligand>
        <name>2-oxoglutarate</name>
        <dbReference type="ChEBI" id="CHEBI:16810"/>
    </ligand>
</feature>
<feature type="binding site" evidence="7 10">
    <location>
        <position position="604"/>
    </location>
    <ligand>
        <name>2-oxoglutarate</name>
        <dbReference type="ChEBI" id="CHEBI:16810"/>
    </ligand>
</feature>
<feature type="binding site" evidence="5 9">
    <location>
        <position position="604"/>
    </location>
    <ligand>
        <name>thiamine diphosphate</name>
        <dbReference type="ChEBI" id="CHEBI:58937"/>
    </ligand>
</feature>
<feature type="binding site" evidence="5 9">
    <location>
        <position position="606"/>
    </location>
    <ligand>
        <name>thiamine diphosphate</name>
        <dbReference type="ChEBI" id="CHEBI:58937"/>
    </ligand>
</feature>
<feature type="binding site" evidence="5 9">
    <location>
        <position position="645"/>
    </location>
    <ligand>
        <name>Mg(2+)</name>
        <dbReference type="ChEBI" id="CHEBI:18420"/>
    </ligand>
</feature>
<feature type="binding site" evidence="5 9">
    <location>
        <position position="645"/>
    </location>
    <ligand>
        <name>thiamine diphosphate</name>
        <dbReference type="ChEBI" id="CHEBI:58937"/>
    </ligand>
</feature>
<feature type="binding site" evidence="5 9">
    <location>
        <position position="646"/>
    </location>
    <ligand>
        <name>thiamine diphosphate</name>
        <dbReference type="ChEBI" id="CHEBI:58937"/>
    </ligand>
</feature>
<feature type="binding site" evidence="5 9">
    <location>
        <position position="647"/>
    </location>
    <ligand>
        <name>thiamine diphosphate</name>
        <dbReference type="ChEBI" id="CHEBI:58937"/>
    </ligand>
</feature>
<feature type="binding site" evidence="5 9">
    <location>
        <position position="678"/>
    </location>
    <ligand>
        <name>Mg(2+)</name>
        <dbReference type="ChEBI" id="CHEBI:18420"/>
    </ligand>
</feature>
<feature type="binding site" evidence="5 9">
    <location>
        <position position="678"/>
    </location>
    <ligand>
        <name>thiamine diphosphate</name>
        <dbReference type="ChEBI" id="CHEBI:58937"/>
    </ligand>
</feature>
<feature type="binding site" evidence="5 9">
    <location>
        <position position="680"/>
    </location>
    <ligand>
        <name>Mg(2+)</name>
        <dbReference type="ChEBI" id="CHEBI:18420"/>
    </ligand>
</feature>
<feature type="binding site" evidence="7 10">
    <location>
        <position position="1020"/>
    </location>
    <ligand>
        <name>2-oxoglutarate</name>
        <dbReference type="ChEBI" id="CHEBI:16810"/>
    </ligand>
</feature>
<feature type="binding site" evidence="5 9">
    <location>
        <position position="1038"/>
    </location>
    <ligand>
        <name>acetyl-CoA</name>
        <dbReference type="ChEBI" id="CHEBI:57288"/>
        <note>allosteric activator</note>
    </ligand>
</feature>
<feature type="binding site" evidence="5 9">
    <location>
        <position position="1054"/>
    </location>
    <ligand>
        <name>acetyl-CoA</name>
        <dbReference type="ChEBI" id="CHEBI:57288"/>
        <note>allosteric activator</note>
    </ligand>
</feature>
<feature type="binding site" evidence="5 9">
    <location>
        <position position="1089"/>
    </location>
    <ligand>
        <name>acetyl-CoA</name>
        <dbReference type="ChEBI" id="CHEBI:57288"/>
        <note>allosteric activator</note>
    </ligand>
</feature>
<feature type="binding site" evidence="5 9">
    <location>
        <position position="1092"/>
    </location>
    <ligand>
        <name>acetyl-CoA</name>
        <dbReference type="ChEBI" id="CHEBI:57288"/>
        <note>allosteric activator</note>
    </ligand>
</feature>
<feature type="binding site" evidence="5 9">
    <location>
        <position position="1142"/>
    </location>
    <ligand>
        <name>acetyl-CoA</name>
        <dbReference type="ChEBI" id="CHEBI:57288"/>
        <note>allosteric activator</note>
    </ligand>
</feature>
<feature type="binding site" evidence="5 9">
    <location>
        <position position="1149"/>
    </location>
    <ligand>
        <name>acetyl-CoA</name>
        <dbReference type="ChEBI" id="CHEBI:57288"/>
        <note>allosteric activator</note>
    </ligand>
</feature>
<feature type="binding site" evidence="5 9">
    <location>
        <position position="1150"/>
    </location>
    <ligand>
        <name>acetyl-CoA</name>
        <dbReference type="ChEBI" id="CHEBI:57288"/>
        <note>allosteric activator</note>
    </ligand>
</feature>
<feature type="mutagenesis site" description="Loss of KG decarboxylase activity." evidence="5">
    <original>H</original>
    <variation>A</variation>
    <location>
        <position position="539"/>
    </location>
</feature>
<feature type="mutagenesis site" description="Loss of KG decarboxylase activity." evidence="5">
    <original>H</original>
    <variation>A</variation>
    <location>
        <position position="579"/>
    </location>
</feature>
<feature type="mutagenesis site" description="40-fold decrease in KG decarboxylase activity." evidence="5">
    <original>H</original>
    <variation>A</variation>
    <location>
        <position position="747"/>
    </location>
</feature>
<feature type="mutagenesis site" description="Increase in KG decarboxylase activity." evidence="5">
    <original>R</original>
    <variation>A</variation>
    <location>
        <position position="781"/>
    </location>
</feature>
<feature type="mutagenesis site" description="Loss of KG decarboxylase activity." evidence="5">
    <original>H</original>
    <variation>A</variation>
    <location>
        <position position="1020"/>
    </location>
</feature>
<feature type="mutagenesis site" description="Loss of activation by acetyl-CoA." evidence="5">
    <original>E</original>
    <variation>A</variation>
    <location>
        <position position="1034"/>
    </location>
</feature>
<feature type="mutagenesis site" description="Loss of activation by acetyl-CoA." evidence="5">
    <original>R</original>
    <variation>A</variation>
    <location>
        <position position="1062"/>
    </location>
</feature>
<feature type="strand" evidence="13">
    <location>
        <begin position="124"/>
        <end position="132"/>
    </location>
</feature>
<feature type="helix" evidence="13">
    <location>
        <begin position="134"/>
        <end position="149"/>
    </location>
</feature>
<feature type="helix" evidence="13">
    <location>
        <begin position="157"/>
        <end position="171"/>
    </location>
</feature>
<feature type="helix" evidence="13">
    <location>
        <begin position="173"/>
        <end position="176"/>
    </location>
</feature>
<feature type="strand" evidence="13">
    <location>
        <begin position="178"/>
        <end position="189"/>
    </location>
</feature>
<feature type="strand" evidence="13">
    <location>
        <begin position="196"/>
        <end position="199"/>
    </location>
</feature>
<feature type="strand" evidence="13">
    <location>
        <begin position="213"/>
        <end position="216"/>
    </location>
</feature>
<feature type="helix" evidence="13">
    <location>
        <begin position="219"/>
        <end position="221"/>
    </location>
</feature>
<feature type="helix" evidence="13">
    <location>
        <begin position="224"/>
        <end position="238"/>
    </location>
</feature>
<feature type="turn" evidence="13">
    <location>
        <begin position="239"/>
        <end position="241"/>
    </location>
</feature>
<feature type="helix" evidence="13">
    <location>
        <begin position="245"/>
        <end position="247"/>
    </location>
</feature>
<feature type="strand" evidence="13">
    <location>
        <begin position="252"/>
        <end position="256"/>
    </location>
</feature>
<feature type="strand" evidence="13">
    <location>
        <begin position="275"/>
        <end position="280"/>
    </location>
</feature>
<feature type="helix" evidence="13">
    <location>
        <begin position="294"/>
        <end position="300"/>
    </location>
</feature>
<feature type="strand" evidence="13">
    <location>
        <begin position="305"/>
        <end position="313"/>
    </location>
</feature>
<feature type="turn" evidence="13">
    <location>
        <begin position="314"/>
        <end position="316"/>
    </location>
</feature>
<feature type="helix" evidence="13">
    <location>
        <begin position="319"/>
        <end position="332"/>
    </location>
</feature>
<feature type="helix" evidence="13">
    <location>
        <begin position="336"/>
        <end position="345"/>
    </location>
</feature>
<feature type="helix" evidence="18">
    <location>
        <begin position="366"/>
        <end position="380"/>
    </location>
</feature>
<feature type="helix" evidence="18">
    <location>
        <begin position="381"/>
        <end position="384"/>
    </location>
</feature>
<feature type="helix" evidence="16">
    <location>
        <begin position="395"/>
        <end position="398"/>
    </location>
</feature>
<feature type="turn" evidence="13">
    <location>
        <begin position="401"/>
        <end position="403"/>
    </location>
</feature>
<feature type="helix" evidence="14">
    <location>
        <begin position="406"/>
        <end position="408"/>
    </location>
</feature>
<feature type="helix" evidence="18">
    <location>
        <begin position="412"/>
        <end position="416"/>
    </location>
</feature>
<feature type="strand" evidence="18">
    <location>
        <begin position="417"/>
        <end position="423"/>
    </location>
</feature>
<feature type="strand" evidence="18">
    <location>
        <begin position="426"/>
        <end position="431"/>
    </location>
</feature>
<feature type="helix" evidence="18">
    <location>
        <begin position="432"/>
        <end position="443"/>
    </location>
</feature>
<feature type="strand" evidence="18">
    <location>
        <begin position="444"/>
        <end position="450"/>
    </location>
</feature>
<feature type="helix" evidence="18">
    <location>
        <begin position="457"/>
        <end position="467"/>
    </location>
</feature>
<feature type="helix" evidence="18">
    <location>
        <begin position="476"/>
        <end position="499"/>
    </location>
</feature>
<feature type="strand" evidence="20">
    <location>
        <begin position="500"/>
        <end position="502"/>
    </location>
</feature>
<feature type="helix" evidence="16">
    <location>
        <begin position="504"/>
        <end position="506"/>
    </location>
</feature>
<feature type="helix" evidence="18">
    <location>
        <begin position="514"/>
        <end position="527"/>
    </location>
</feature>
<feature type="strand" evidence="18">
    <location>
        <begin position="531"/>
        <end position="536"/>
    </location>
</feature>
<feature type="helix" evidence="18">
    <location>
        <begin position="542"/>
        <end position="548"/>
    </location>
</feature>
<feature type="helix" evidence="18">
    <location>
        <begin position="554"/>
        <end position="562"/>
    </location>
</feature>
<feature type="turn" evidence="18">
    <location>
        <begin position="567"/>
        <end position="570"/>
    </location>
</feature>
<feature type="strand" evidence="17">
    <location>
        <begin position="571"/>
        <end position="573"/>
    </location>
</feature>
<feature type="helix" evidence="18">
    <location>
        <begin position="577"/>
        <end position="579"/>
    </location>
</feature>
<feature type="strand" evidence="18">
    <location>
        <begin position="582"/>
        <end position="587"/>
    </location>
</feature>
<feature type="strand" evidence="18">
    <location>
        <begin position="589"/>
        <end position="592"/>
    </location>
</feature>
<feature type="strand" evidence="18">
    <location>
        <begin position="594"/>
        <end position="599"/>
    </location>
</feature>
<feature type="turn" evidence="18">
    <location>
        <begin position="606"/>
        <end position="608"/>
    </location>
</feature>
<feature type="helix" evidence="18">
    <location>
        <begin position="609"/>
        <end position="624"/>
    </location>
</feature>
<feature type="strand" evidence="18">
    <location>
        <begin position="630"/>
        <end position="632"/>
    </location>
</feature>
<feature type="strand" evidence="18">
    <location>
        <begin position="637"/>
        <end position="644"/>
    </location>
</feature>
<feature type="helix" evidence="18">
    <location>
        <begin position="645"/>
        <end position="650"/>
    </location>
</feature>
<feature type="helix" evidence="18">
    <location>
        <begin position="652"/>
        <end position="658"/>
    </location>
</feature>
<feature type="turn" evidence="18">
    <location>
        <begin position="659"/>
        <end position="662"/>
    </location>
</feature>
<feature type="turn" evidence="18">
    <location>
        <begin position="664"/>
        <end position="666"/>
    </location>
</feature>
<feature type="strand" evidence="18">
    <location>
        <begin position="672"/>
        <end position="677"/>
    </location>
</feature>
<feature type="helix" evidence="18">
    <location>
        <begin position="686"/>
        <end position="689"/>
    </location>
</feature>
<feature type="strand" evidence="18">
    <location>
        <begin position="691"/>
        <end position="694"/>
    </location>
</feature>
<feature type="helix" evidence="18">
    <location>
        <begin position="697"/>
        <end position="702"/>
    </location>
</feature>
<feature type="strand" evidence="18">
    <location>
        <begin position="706"/>
        <end position="710"/>
    </location>
</feature>
<feature type="helix" evidence="18">
    <location>
        <begin position="714"/>
        <end position="731"/>
    </location>
</feature>
<feature type="strand" evidence="18">
    <location>
        <begin position="735"/>
        <end position="740"/>
    </location>
</feature>
<feature type="helix" evidence="18">
    <location>
        <begin position="753"/>
        <end position="755"/>
    </location>
</feature>
<feature type="helix" evidence="18">
    <location>
        <begin position="758"/>
        <end position="764"/>
    </location>
</feature>
<feature type="helix" evidence="18">
    <location>
        <begin position="770"/>
        <end position="780"/>
    </location>
</feature>
<feature type="helix" evidence="18">
    <location>
        <begin position="786"/>
        <end position="808"/>
    </location>
</feature>
<feature type="helix" evidence="18">
    <location>
        <begin position="822"/>
        <end position="824"/>
    </location>
</feature>
<feature type="helix" evidence="18">
    <location>
        <begin position="837"/>
        <end position="846"/>
    </location>
</feature>
<feature type="turn" evidence="18">
    <location>
        <begin position="858"/>
        <end position="860"/>
    </location>
</feature>
<feature type="helix" evidence="18">
    <location>
        <begin position="861"/>
        <end position="873"/>
    </location>
</feature>
<feature type="helix" evidence="18">
    <location>
        <begin position="878"/>
        <end position="891"/>
    </location>
</feature>
<feature type="strand" evidence="18">
    <location>
        <begin position="895"/>
        <end position="900"/>
    </location>
</feature>
<feature type="turn" evidence="18">
    <location>
        <begin position="901"/>
        <end position="905"/>
    </location>
</feature>
<feature type="strand" evidence="18">
    <location>
        <begin position="913"/>
        <end position="916"/>
    </location>
</feature>
<feature type="turn" evidence="18">
    <location>
        <begin position="918"/>
        <end position="920"/>
    </location>
</feature>
<feature type="helix" evidence="18">
    <location>
        <begin position="926"/>
        <end position="931"/>
    </location>
</feature>
<feature type="strand" evidence="18">
    <location>
        <begin position="942"/>
        <end position="947"/>
    </location>
</feature>
<feature type="helix" evidence="18">
    <location>
        <begin position="953"/>
        <end position="965"/>
    </location>
</feature>
<feature type="strand" evidence="18">
    <location>
        <begin position="969"/>
        <end position="974"/>
    </location>
</feature>
<feature type="helix" evidence="18">
    <location>
        <begin position="978"/>
        <end position="984"/>
    </location>
</feature>
<feature type="helix" evidence="18">
    <location>
        <begin position="985"/>
        <end position="990"/>
    </location>
</feature>
<feature type="turn" evidence="18">
    <location>
        <begin position="991"/>
        <end position="994"/>
    </location>
</feature>
<feature type="helix" evidence="18">
    <location>
        <begin position="995"/>
        <end position="999"/>
    </location>
</feature>
<feature type="strand" evidence="18">
    <location>
        <begin position="1006"/>
        <end position="1010"/>
    </location>
</feature>
<feature type="strand" evidence="18">
    <location>
        <begin position="1014"/>
        <end position="1016"/>
    </location>
</feature>
<feature type="helix" evidence="18">
    <location>
        <begin position="1025"/>
        <end position="1031"/>
    </location>
</feature>
<feature type="turn" evidence="20">
    <location>
        <begin position="1034"/>
        <end position="1036"/>
    </location>
</feature>
<feature type="strand" evidence="18">
    <location>
        <begin position="1038"/>
        <end position="1040"/>
    </location>
</feature>
<feature type="helix" evidence="18">
    <location>
        <begin position="1045"/>
        <end position="1057"/>
    </location>
</feature>
<feature type="strand" evidence="18">
    <location>
        <begin position="1064"/>
        <end position="1068"/>
    </location>
</feature>
<feature type="helix" evidence="18">
    <location>
        <begin position="1071"/>
        <end position="1074"/>
    </location>
</feature>
<feature type="strand" evidence="15">
    <location>
        <begin position="1076"/>
        <end position="1078"/>
    </location>
</feature>
<feature type="helix" evidence="18">
    <location>
        <begin position="1082"/>
        <end position="1086"/>
    </location>
</feature>
<feature type="strand" evidence="18">
    <location>
        <begin position="1092"/>
        <end position="1094"/>
    </location>
</feature>
<feature type="helix" evidence="18">
    <location>
        <begin position="1097"/>
        <end position="1100"/>
    </location>
</feature>
<feature type="helix" evidence="18">
    <location>
        <begin position="1106"/>
        <end position="1108"/>
    </location>
</feature>
<feature type="strand" evidence="18">
    <location>
        <begin position="1111"/>
        <end position="1115"/>
    </location>
</feature>
<feature type="helix" evidence="18">
    <location>
        <begin position="1119"/>
        <end position="1130"/>
    </location>
</feature>
<feature type="strand" evidence="18">
    <location>
        <begin position="1135"/>
        <end position="1145"/>
    </location>
</feature>
<feature type="helix" evidence="18">
    <location>
        <begin position="1148"/>
        <end position="1155"/>
    </location>
</feature>
<feature type="strand" evidence="18">
    <location>
        <begin position="1163"/>
        <end position="1171"/>
    </location>
</feature>
<feature type="strand" evidence="19">
    <location>
        <begin position="1174"/>
        <end position="1176"/>
    </location>
</feature>
<feature type="helix" evidence="18">
    <location>
        <begin position="1177"/>
        <end position="1187"/>
    </location>
</feature>
<feature type="helix" evidence="18">
    <location>
        <begin position="1189"/>
        <end position="1192"/>
    </location>
</feature>
<feature type="strand" evidence="18">
    <location>
        <begin position="1196"/>
        <end position="1200"/>
    </location>
</feature>
<feature type="strand" evidence="18">
    <location>
        <begin position="1204"/>
        <end position="1207"/>
    </location>
</feature>
<feature type="helix" evidence="18">
    <location>
        <begin position="1211"/>
        <end position="1225"/>
    </location>
</feature>